<gene>
    <name type="primary">mtb</name>
</gene>
<reference key="1">
    <citation type="submission" date="1996-04" db="EMBL/GenBank/DDBJ databases">
        <title>The use of metallothionein genes for determining the phylogenetic and evolutionary relationship between extant teleosts.</title>
        <authorList>
            <person name="Kille P."/>
            <person name="Olsson P.-E."/>
        </authorList>
    </citation>
    <scope>NUCLEOTIDE SEQUENCE [MRNA]</scope>
    <source>
        <tissue>Liver</tissue>
    </source>
</reference>
<feature type="chain" id="PRO_0000197315" description="Metallothionein B">
    <location>
        <begin position="1"/>
        <end position="60"/>
    </location>
</feature>
<feature type="region of interest" description="Beta">
    <location>
        <begin position="1"/>
        <end position="28"/>
    </location>
</feature>
<feature type="region of interest" description="Alpha">
    <location>
        <begin position="29"/>
        <end position="60"/>
    </location>
</feature>
<feature type="binding site" evidence="2">
    <location>
        <position position="4"/>
    </location>
    <ligand>
        <name>a divalent metal cation</name>
        <dbReference type="ChEBI" id="CHEBI:60240"/>
        <label>1</label>
        <note>in cluster B</note>
    </ligand>
</feature>
<feature type="binding site" evidence="2">
    <location>
        <position position="6"/>
    </location>
    <ligand>
        <name>a divalent metal cation</name>
        <dbReference type="ChEBI" id="CHEBI:60240"/>
        <label>1</label>
        <note>in cluster B</note>
    </ligand>
</feature>
<feature type="binding site" evidence="2">
    <location>
        <position position="6"/>
    </location>
    <ligand>
        <name>a divalent metal cation</name>
        <dbReference type="ChEBI" id="CHEBI:60240"/>
        <label>2</label>
        <note>in cluster B</note>
    </ligand>
</feature>
<feature type="binding site" evidence="2">
    <location>
        <position position="12"/>
    </location>
    <ligand>
        <name>a divalent metal cation</name>
        <dbReference type="ChEBI" id="CHEBI:60240"/>
        <label>2</label>
        <note>in cluster B</note>
    </ligand>
</feature>
<feature type="binding site" evidence="2">
    <location>
        <position position="14"/>
    </location>
    <ligand>
        <name>a divalent metal cation</name>
        <dbReference type="ChEBI" id="CHEBI:60240"/>
        <label>2</label>
        <note>in cluster B</note>
    </ligand>
</feature>
<feature type="binding site" evidence="2">
    <location>
        <position position="14"/>
    </location>
    <ligand>
        <name>a divalent metal cation</name>
        <dbReference type="ChEBI" id="CHEBI:60240"/>
        <label>3</label>
        <note>in cluster B</note>
    </ligand>
</feature>
<feature type="binding site" evidence="2">
    <location>
        <position position="18"/>
    </location>
    <ligand>
        <name>a divalent metal cation</name>
        <dbReference type="ChEBI" id="CHEBI:60240"/>
        <label>3</label>
        <note>in cluster B</note>
    </ligand>
</feature>
<feature type="binding site" evidence="2">
    <location>
        <position position="20"/>
    </location>
    <ligand>
        <name>a divalent metal cation</name>
        <dbReference type="ChEBI" id="CHEBI:60240"/>
        <label>1</label>
        <note>in cluster B</note>
    </ligand>
</feature>
<feature type="binding site" evidence="2">
    <location>
        <position position="23"/>
    </location>
    <ligand>
        <name>a divalent metal cation</name>
        <dbReference type="ChEBI" id="CHEBI:60240"/>
        <label>1</label>
        <note>in cluster B</note>
    </ligand>
</feature>
<feature type="binding site" evidence="2">
    <location>
        <position position="23"/>
    </location>
    <ligand>
        <name>a divalent metal cation</name>
        <dbReference type="ChEBI" id="CHEBI:60240"/>
        <label>3</label>
        <note>in cluster B</note>
    </ligand>
</feature>
<feature type="binding site" evidence="2">
    <location>
        <position position="25"/>
    </location>
    <ligand>
        <name>a divalent metal cation</name>
        <dbReference type="ChEBI" id="CHEBI:60240"/>
        <label>2</label>
        <note>in cluster B</note>
    </ligand>
</feature>
<feature type="binding site" evidence="2">
    <location>
        <position position="28"/>
    </location>
    <ligand>
        <name>a divalent metal cation</name>
        <dbReference type="ChEBI" id="CHEBI:60240"/>
        <label>3</label>
        <note>in cluster B</note>
    </ligand>
</feature>
<feature type="binding site" evidence="2">
    <location>
        <position position="32"/>
    </location>
    <ligand>
        <name>a divalent metal cation</name>
        <dbReference type="ChEBI" id="CHEBI:60240"/>
        <label>4</label>
        <note>in cluster A</note>
    </ligand>
</feature>
<feature type="binding site" evidence="2">
    <location>
        <position position="33"/>
    </location>
    <ligand>
        <name>a divalent metal cation</name>
        <dbReference type="ChEBI" id="CHEBI:60240"/>
        <label>4</label>
        <note>in cluster A</note>
    </ligand>
</feature>
<feature type="binding site" evidence="2">
    <location>
        <position position="33"/>
    </location>
    <ligand>
        <name>a divalent metal cation</name>
        <dbReference type="ChEBI" id="CHEBI:60240"/>
        <label>5</label>
        <note>in cluster A</note>
    </ligand>
</feature>
<feature type="binding site" evidence="2">
    <location>
        <position position="35"/>
    </location>
    <ligand>
        <name>a divalent metal cation</name>
        <dbReference type="ChEBI" id="CHEBI:60240"/>
        <label>5</label>
        <note>in cluster A</note>
    </ligand>
</feature>
<feature type="binding site" evidence="2">
    <location>
        <position position="36"/>
    </location>
    <ligand>
        <name>a divalent metal cation</name>
        <dbReference type="ChEBI" id="CHEBI:60240"/>
        <label>5</label>
        <note>in cluster A</note>
    </ligand>
</feature>
<feature type="binding site" evidence="2">
    <location>
        <position position="36"/>
    </location>
    <ligand>
        <name>a divalent metal cation</name>
        <dbReference type="ChEBI" id="CHEBI:60240"/>
        <label>6</label>
        <note>in cluster A</note>
    </ligand>
</feature>
<feature type="binding site" evidence="2">
    <location>
        <position position="40"/>
    </location>
    <ligand>
        <name>a divalent metal cation</name>
        <dbReference type="ChEBI" id="CHEBI:60240"/>
        <label>6</label>
        <note>in cluster A</note>
    </ligand>
</feature>
<feature type="binding site" evidence="2">
    <location>
        <position position="43"/>
    </location>
    <ligand>
        <name>a divalent metal cation</name>
        <dbReference type="ChEBI" id="CHEBI:60240"/>
        <label>4</label>
        <note>in cluster A</note>
    </ligand>
</feature>
<feature type="binding site" evidence="2">
    <location>
        <position position="43"/>
    </location>
    <ligand>
        <name>a divalent metal cation</name>
        <dbReference type="ChEBI" id="CHEBI:60240"/>
        <label>6</label>
        <note>in cluster A</note>
    </ligand>
</feature>
<feature type="binding site" evidence="2">
    <location>
        <position position="47"/>
    </location>
    <ligand>
        <name>a divalent metal cation</name>
        <dbReference type="ChEBI" id="CHEBI:60240"/>
        <label>4</label>
        <note>in cluster A</note>
    </ligand>
</feature>
<feature type="binding site" evidence="2">
    <location>
        <position position="49"/>
    </location>
    <ligand>
        <name>a divalent metal cation</name>
        <dbReference type="ChEBI" id="CHEBI:60240"/>
        <label>5</label>
        <note>in cluster A</note>
    </ligand>
</feature>
<feature type="binding site" evidence="2">
    <location>
        <position position="49"/>
    </location>
    <ligand>
        <name>a divalent metal cation</name>
        <dbReference type="ChEBI" id="CHEBI:60240"/>
        <label>7</label>
        <note>in cluster A</note>
    </ligand>
</feature>
<feature type="binding site" evidence="3">
    <location>
        <position position="54"/>
    </location>
    <ligand>
        <name>a divalent metal cation</name>
        <dbReference type="ChEBI" id="CHEBI:60240"/>
        <label>7</label>
        <note>in cluster A</note>
    </ligand>
</feature>
<feature type="binding site" evidence="2">
    <location>
        <position position="58"/>
    </location>
    <ligand>
        <name>a divalent metal cation</name>
        <dbReference type="ChEBI" id="CHEBI:60240"/>
        <label>7</label>
        <note>in cluster A</note>
    </ligand>
</feature>
<feature type="binding site" evidence="2">
    <location>
        <position position="59"/>
    </location>
    <ligand>
        <name>a divalent metal cation</name>
        <dbReference type="ChEBI" id="CHEBI:60240"/>
        <label>6</label>
        <note>in cluster A</note>
    </ligand>
</feature>
<feature type="binding site" evidence="2">
    <location>
        <position position="59"/>
    </location>
    <ligand>
        <name>a divalent metal cation</name>
        <dbReference type="ChEBI" id="CHEBI:60240"/>
        <label>7</label>
        <note>in cluster A</note>
    </ligand>
</feature>
<accession>P52720</accession>
<protein>
    <recommendedName>
        <fullName>Metallothionein B</fullName>
        <shortName>MT-B</shortName>
    </recommendedName>
</protein>
<keyword id="KW-0479">Metal-binding</keyword>
<keyword id="KW-0480">Metal-thiolate cluster</keyword>
<keyword id="KW-1185">Reference proteome</keyword>
<dbReference type="EMBL" id="X97275">
    <property type="protein sequence ID" value="CAA65930.1"/>
    <property type="molecule type" value="mRNA"/>
</dbReference>
<dbReference type="RefSeq" id="NP_001117141.1">
    <property type="nucleotide sequence ID" value="NM_001123669.1"/>
</dbReference>
<dbReference type="SMR" id="P52720"/>
<dbReference type="STRING" id="8030.ENSSSAP00000073501"/>
<dbReference type="PaxDb" id="8030-ENSSSAP00000073501"/>
<dbReference type="Ensembl" id="ENSSSAT00070049677">
    <property type="protein sequence ID" value="ENSSSAP00070047671"/>
    <property type="gene ID" value="ENSSSAG00070030992"/>
</dbReference>
<dbReference type="GeneID" id="100136581"/>
<dbReference type="KEGG" id="sasa:100136581"/>
<dbReference type="CTD" id="17750"/>
<dbReference type="Proteomes" id="UP000087266">
    <property type="component" value="Chromosome ssa10"/>
</dbReference>
<dbReference type="Bgee" id="ENSSSAG00000064369">
    <property type="expression patterns" value="Expressed in notochord and 26 other cell types or tissues"/>
</dbReference>
<dbReference type="GO" id="GO:0046872">
    <property type="term" value="F:metal ion binding"/>
    <property type="evidence" value="ECO:0007669"/>
    <property type="project" value="UniProtKB-KW"/>
</dbReference>
<dbReference type="GO" id="GO:0046688">
    <property type="term" value="P:response to copper ion"/>
    <property type="evidence" value="ECO:0000250"/>
    <property type="project" value="AgBase"/>
</dbReference>
<dbReference type="FunFam" id="4.10.10.10:FF:000001">
    <property type="entry name" value="Metallothionein"/>
    <property type="match status" value="1"/>
</dbReference>
<dbReference type="Gene3D" id="4.10.10.10">
    <property type="entry name" value="Metallothionein Isoform II"/>
    <property type="match status" value="1"/>
</dbReference>
<dbReference type="InterPro" id="IPR017854">
    <property type="entry name" value="Metalthion_dom_sf"/>
</dbReference>
<dbReference type="InterPro" id="IPR023587">
    <property type="entry name" value="Metalthion_dom_sf_vert"/>
</dbReference>
<dbReference type="InterPro" id="IPR000006">
    <property type="entry name" value="Metalthion_vert"/>
</dbReference>
<dbReference type="InterPro" id="IPR018064">
    <property type="entry name" value="Metalthion_vert_metal_BS"/>
</dbReference>
<dbReference type="PANTHER" id="PTHR23299">
    <property type="entry name" value="METALLOTHIONEIN"/>
    <property type="match status" value="1"/>
</dbReference>
<dbReference type="PANTHER" id="PTHR23299:SF24">
    <property type="entry name" value="METALLOTHIONEIN-1X"/>
    <property type="match status" value="1"/>
</dbReference>
<dbReference type="Pfam" id="PF00131">
    <property type="entry name" value="Metallothio"/>
    <property type="match status" value="1"/>
</dbReference>
<dbReference type="PRINTS" id="PR00860">
    <property type="entry name" value="MTVERTEBRATE"/>
</dbReference>
<dbReference type="SUPFAM" id="SSF57868">
    <property type="entry name" value="Metallothionein"/>
    <property type="match status" value="1"/>
</dbReference>
<dbReference type="PROSITE" id="PS00203">
    <property type="entry name" value="METALLOTHIONEIN_VRT"/>
    <property type="match status" value="1"/>
</dbReference>
<name>MTB_SALSA</name>
<organism>
    <name type="scientific">Salmo salar</name>
    <name type="common">Atlantic salmon</name>
    <dbReference type="NCBI Taxonomy" id="8030"/>
    <lineage>
        <taxon>Eukaryota</taxon>
        <taxon>Metazoa</taxon>
        <taxon>Chordata</taxon>
        <taxon>Craniata</taxon>
        <taxon>Vertebrata</taxon>
        <taxon>Euteleostomi</taxon>
        <taxon>Actinopterygii</taxon>
        <taxon>Neopterygii</taxon>
        <taxon>Teleostei</taxon>
        <taxon>Protacanthopterygii</taxon>
        <taxon>Salmoniformes</taxon>
        <taxon>Salmonidae</taxon>
        <taxon>Salmoninae</taxon>
        <taxon>Salmo</taxon>
    </lineage>
</organism>
<proteinExistence type="inferred from homology"/>
<sequence>MDPCECSKTGSCNCGGSCKCANCACTSCKKSCCPCCPSGCSKCASGCVCKGKTCDTSCCQ</sequence>
<evidence type="ECO:0000250" key="1"/>
<evidence type="ECO:0000250" key="2">
    <source>
        <dbReference type="UniProtKB" id="P02795"/>
    </source>
</evidence>
<evidence type="ECO:0000250" key="3">
    <source>
        <dbReference type="UniProtKB" id="P62339"/>
    </source>
</evidence>
<evidence type="ECO:0000305" key="4"/>
<comment type="function">
    <text evidence="1">Metallothioneins have a high content of cysteine residues that bind various heavy metals.</text>
</comment>
<comment type="domain">
    <text>Class I metallothioneins contain 2 metal-binding domains: four divalent ions are chelated within cluster A of the alpha domain and are coordinated via cysteinyl thiolate bridges to 11 cysteine ligands. Cluster B, the corresponding region within the beta domain, can ligate three divalent ions to 9 cysteines.</text>
</comment>
<comment type="similarity">
    <text evidence="4">Belongs to the metallothionein superfamily. Type 1 family.</text>
</comment>